<proteinExistence type="evidence at protein level"/>
<sequence>ATYKVKLVTPEGEVELEVPDDVYILDQAEEEGIDLPYSCRAGSCSSCAGKLVSGEIDQSDQSFLDDDQMEEGWVLTCAAYPKSDVVIETHKEEELTA</sequence>
<evidence type="ECO:0000250" key="1">
    <source>
        <dbReference type="UniProtKB" id="P00228"/>
    </source>
</evidence>
<evidence type="ECO:0000255" key="2">
    <source>
        <dbReference type="PROSITE-ProRule" id="PRU00465"/>
    </source>
</evidence>
<evidence type="ECO:0000269" key="3">
    <source>
    </source>
</evidence>
<evidence type="ECO:0000305" key="4"/>
<feature type="chain" id="PRO_0000189336" description="Ferredoxin">
    <location>
        <begin position="1"/>
        <end position="97"/>
    </location>
</feature>
<feature type="domain" description="2Fe-2S ferredoxin-type" evidence="2">
    <location>
        <begin position="3"/>
        <end position="93"/>
    </location>
</feature>
<feature type="binding site" evidence="2">
    <location>
        <position position="39"/>
    </location>
    <ligand>
        <name>[2Fe-2S] cluster</name>
        <dbReference type="ChEBI" id="CHEBI:190135"/>
    </ligand>
</feature>
<feature type="binding site" evidence="2">
    <location>
        <position position="44"/>
    </location>
    <ligand>
        <name>[2Fe-2S] cluster</name>
        <dbReference type="ChEBI" id="CHEBI:190135"/>
    </ligand>
</feature>
<feature type="binding site" evidence="2">
    <location>
        <position position="47"/>
    </location>
    <ligand>
        <name>[2Fe-2S] cluster</name>
        <dbReference type="ChEBI" id="CHEBI:190135"/>
    </ligand>
</feature>
<feature type="binding site" evidence="2">
    <location>
        <position position="77"/>
    </location>
    <ligand>
        <name>[2Fe-2S] cluster</name>
        <dbReference type="ChEBI" id="CHEBI:190135"/>
    </ligand>
</feature>
<name>FER_HORVU</name>
<dbReference type="SMR" id="P83522"/>
<dbReference type="ExpressionAtlas" id="P83522">
    <property type="expression patterns" value="baseline and differential"/>
</dbReference>
<dbReference type="GO" id="GO:0009570">
    <property type="term" value="C:chloroplast stroma"/>
    <property type="evidence" value="ECO:0007669"/>
    <property type="project" value="TreeGrafter"/>
</dbReference>
<dbReference type="GO" id="GO:0051537">
    <property type="term" value="F:2 iron, 2 sulfur cluster binding"/>
    <property type="evidence" value="ECO:0007669"/>
    <property type="project" value="UniProtKB-KW"/>
</dbReference>
<dbReference type="GO" id="GO:0009055">
    <property type="term" value="F:electron transfer activity"/>
    <property type="evidence" value="ECO:0000304"/>
    <property type="project" value="UniProtKB"/>
</dbReference>
<dbReference type="GO" id="GO:0046872">
    <property type="term" value="F:metal ion binding"/>
    <property type="evidence" value="ECO:0007669"/>
    <property type="project" value="UniProtKB-KW"/>
</dbReference>
<dbReference type="GO" id="GO:0022900">
    <property type="term" value="P:electron transport chain"/>
    <property type="evidence" value="ECO:0007669"/>
    <property type="project" value="InterPro"/>
</dbReference>
<dbReference type="GO" id="GO:0006124">
    <property type="term" value="P:ferredoxin metabolic process"/>
    <property type="evidence" value="ECO:0000304"/>
    <property type="project" value="UniProtKB"/>
</dbReference>
<dbReference type="CDD" id="cd00207">
    <property type="entry name" value="fer2"/>
    <property type="match status" value="1"/>
</dbReference>
<dbReference type="FunFam" id="3.10.20.30:FF:000014">
    <property type="entry name" value="Ferredoxin"/>
    <property type="match status" value="1"/>
</dbReference>
<dbReference type="Gene3D" id="3.10.20.30">
    <property type="match status" value="1"/>
</dbReference>
<dbReference type="InterPro" id="IPR036010">
    <property type="entry name" value="2Fe-2S_ferredoxin-like_sf"/>
</dbReference>
<dbReference type="InterPro" id="IPR001041">
    <property type="entry name" value="2Fe-2S_ferredoxin-type"/>
</dbReference>
<dbReference type="InterPro" id="IPR006058">
    <property type="entry name" value="2Fe2S_fd_BS"/>
</dbReference>
<dbReference type="InterPro" id="IPR012675">
    <property type="entry name" value="Beta-grasp_dom_sf"/>
</dbReference>
<dbReference type="InterPro" id="IPR010241">
    <property type="entry name" value="Fd_pln"/>
</dbReference>
<dbReference type="NCBIfam" id="TIGR02008">
    <property type="entry name" value="fdx_plant"/>
    <property type="match status" value="1"/>
</dbReference>
<dbReference type="PANTHER" id="PTHR43112">
    <property type="entry name" value="FERREDOXIN"/>
    <property type="match status" value="1"/>
</dbReference>
<dbReference type="PANTHER" id="PTHR43112:SF3">
    <property type="entry name" value="FERREDOXIN-2, CHLOROPLASTIC"/>
    <property type="match status" value="1"/>
</dbReference>
<dbReference type="Pfam" id="PF00111">
    <property type="entry name" value="Fer2"/>
    <property type="match status" value="1"/>
</dbReference>
<dbReference type="SUPFAM" id="SSF54292">
    <property type="entry name" value="2Fe-2S ferredoxin-like"/>
    <property type="match status" value="1"/>
</dbReference>
<dbReference type="PROSITE" id="PS00197">
    <property type="entry name" value="2FE2S_FER_1"/>
    <property type="match status" value="1"/>
</dbReference>
<dbReference type="PROSITE" id="PS51085">
    <property type="entry name" value="2FE2S_FER_2"/>
    <property type="match status" value="1"/>
</dbReference>
<reference evidence="4" key="1">
    <citation type="journal article" date="1991" name="Phytochemistry">
        <title>The amino acid sequence of ferredoxin from Hordeum vulgare.</title>
        <authorList>
            <person name="Takruri I.A.-H."/>
        </authorList>
    </citation>
    <scope>PROTEIN SEQUENCE</scope>
    <scope>FUNCTION</scope>
</reference>
<comment type="function">
    <text evidence="3">Ferredoxins are iron-sulfur proteins that transfer electrons in a wide variety of metabolic reactions.</text>
</comment>
<comment type="cofactor">
    <cofactor evidence="1">
        <name>[2Fe-2S] cluster</name>
        <dbReference type="ChEBI" id="CHEBI:190135"/>
    </cofactor>
    <text evidence="1">Binds 1 [2Fe-2S] cluster.</text>
</comment>
<comment type="subcellular location">
    <subcellularLocation>
        <location evidence="1">Plastid</location>
        <location evidence="1">Chloroplast</location>
    </subcellularLocation>
</comment>
<comment type="similarity">
    <text evidence="4">Belongs to the 2Fe2S plant-type ferredoxin family.</text>
</comment>
<protein>
    <recommendedName>
        <fullName>Ferredoxin</fullName>
    </recommendedName>
</protein>
<organism evidence="4">
    <name type="scientific">Hordeum vulgare</name>
    <name type="common">Barley</name>
    <dbReference type="NCBI Taxonomy" id="4513"/>
    <lineage>
        <taxon>Eukaryota</taxon>
        <taxon>Viridiplantae</taxon>
        <taxon>Streptophyta</taxon>
        <taxon>Embryophyta</taxon>
        <taxon>Tracheophyta</taxon>
        <taxon>Spermatophyta</taxon>
        <taxon>Magnoliopsida</taxon>
        <taxon>Liliopsida</taxon>
        <taxon>Poales</taxon>
        <taxon>Poaceae</taxon>
        <taxon>BOP clade</taxon>
        <taxon>Pooideae</taxon>
        <taxon>Triticodae</taxon>
        <taxon>Triticeae</taxon>
        <taxon>Hordeinae</taxon>
        <taxon>Hordeum</taxon>
    </lineage>
</organism>
<accession>P83522</accession>
<keyword id="KW-0001">2Fe-2S</keyword>
<keyword id="KW-0150">Chloroplast</keyword>
<keyword id="KW-0903">Direct protein sequencing</keyword>
<keyword id="KW-0249">Electron transport</keyword>
<keyword id="KW-0408">Iron</keyword>
<keyword id="KW-0411">Iron-sulfur</keyword>
<keyword id="KW-0479">Metal-binding</keyword>
<keyword id="KW-0934">Plastid</keyword>
<keyword id="KW-0813">Transport</keyword>